<protein>
    <recommendedName>
        <fullName>Toxin FS-2</fullName>
        <shortName>FS2</shortName>
    </recommendedName>
</protein>
<name>3SL2_DENPO</name>
<proteinExistence type="evidence at protein level"/>
<sequence>RICYSHKASLPRATKTCVENTCYKMFIRTHRQYISERGCGCPTAMWPYQTECCKGDRCNK</sequence>
<comment type="function">
    <text evidence="1 4">Specific blocker of the voltage-dependent L-type calcium channel (Cav1/CACNA1) (PubMed:8826098). Inhibits cardiac contractions (By similarity).</text>
</comment>
<comment type="subcellular location">
    <subcellularLocation>
        <location evidence="3">Secreted</location>
    </subcellularLocation>
</comment>
<comment type="tissue specificity">
    <text evidence="6">Expressed by the venom gland.</text>
</comment>
<comment type="toxic dose">
    <text evidence="4">LD(50) is 8 mg/kg by subcutaneous injection.</text>
</comment>
<comment type="similarity">
    <text evidence="6">Belongs to the three-finger toxin family. Short-chain subfamily. L-type calcium blocker sub-subfamily.</text>
</comment>
<keyword id="KW-0002">3D-structure</keyword>
<keyword id="KW-0108">Calcium channel impairing toxin</keyword>
<keyword id="KW-0123">Cardiotoxin</keyword>
<keyword id="KW-0903">Direct protein sequencing</keyword>
<keyword id="KW-1015">Disulfide bond</keyword>
<keyword id="KW-0872">Ion channel impairing toxin</keyword>
<keyword id="KW-0964">Secreted</keyword>
<keyword id="KW-0800">Toxin</keyword>
<keyword id="KW-1218">Voltage-gated calcium channel impairing toxin</keyword>
<dbReference type="PIR" id="A01684">
    <property type="entry name" value="T6EP3D"/>
</dbReference>
<dbReference type="PDB" id="1TFS">
    <property type="method" value="NMR"/>
    <property type="chains" value="A=1-60"/>
</dbReference>
<dbReference type="PDBsum" id="1TFS"/>
<dbReference type="SMR" id="P01414"/>
<dbReference type="EvolutionaryTrace" id="P01414"/>
<dbReference type="GO" id="GO:0005576">
    <property type="term" value="C:extracellular region"/>
    <property type="evidence" value="ECO:0007669"/>
    <property type="project" value="UniProtKB-SubCell"/>
</dbReference>
<dbReference type="GO" id="GO:0005246">
    <property type="term" value="F:calcium channel regulator activity"/>
    <property type="evidence" value="ECO:0007669"/>
    <property type="project" value="UniProtKB-KW"/>
</dbReference>
<dbReference type="GO" id="GO:0090729">
    <property type="term" value="F:toxin activity"/>
    <property type="evidence" value="ECO:0007669"/>
    <property type="project" value="UniProtKB-KW"/>
</dbReference>
<dbReference type="CDD" id="cd00206">
    <property type="entry name" value="TFP_snake_toxin"/>
    <property type="match status" value="1"/>
</dbReference>
<dbReference type="Gene3D" id="2.10.60.10">
    <property type="entry name" value="CD59"/>
    <property type="match status" value="1"/>
</dbReference>
<dbReference type="InterPro" id="IPR003571">
    <property type="entry name" value="Snake_3FTx"/>
</dbReference>
<dbReference type="InterPro" id="IPR045860">
    <property type="entry name" value="Snake_toxin-like_sf"/>
</dbReference>
<dbReference type="InterPro" id="IPR018354">
    <property type="entry name" value="Snake_toxin_con_site"/>
</dbReference>
<dbReference type="InterPro" id="IPR054131">
    <property type="entry name" value="Toxin_cobra-type"/>
</dbReference>
<dbReference type="Pfam" id="PF21947">
    <property type="entry name" value="Toxin_cobra-type"/>
    <property type="match status" value="1"/>
</dbReference>
<dbReference type="SUPFAM" id="SSF57302">
    <property type="entry name" value="Snake toxin-like"/>
    <property type="match status" value="1"/>
</dbReference>
<dbReference type="PROSITE" id="PS00272">
    <property type="entry name" value="SNAKE_TOXIN"/>
    <property type="match status" value="1"/>
</dbReference>
<evidence type="ECO:0000250" key="1">
    <source>
        <dbReference type="UniProtKB" id="P22947"/>
    </source>
</evidence>
<evidence type="ECO:0000269" key="2">
    <source>
    </source>
</evidence>
<evidence type="ECO:0000269" key="3">
    <source>
    </source>
</evidence>
<evidence type="ECO:0000269" key="4">
    <source>
    </source>
</evidence>
<evidence type="ECO:0000269" key="5">
    <source>
    </source>
</evidence>
<evidence type="ECO:0000305" key="6"/>
<evidence type="ECO:0000312" key="7">
    <source>
        <dbReference type="PDB" id="1TFS"/>
    </source>
</evidence>
<evidence type="ECO:0007829" key="8">
    <source>
        <dbReference type="PDB" id="1TFS"/>
    </source>
</evidence>
<feature type="chain" id="PRO_0000093666" description="Toxin FS-2" evidence="3">
    <location>
        <begin position="1"/>
        <end position="60"/>
    </location>
</feature>
<feature type="region of interest" description="Important for binding to L-type calcium channels" evidence="5">
    <location>
        <begin position="41"/>
        <end position="48"/>
    </location>
</feature>
<feature type="disulfide bond" evidence="2 7">
    <location>
        <begin position="3"/>
        <end position="22"/>
    </location>
</feature>
<feature type="disulfide bond" evidence="2 7">
    <location>
        <begin position="17"/>
        <end position="39"/>
    </location>
</feature>
<feature type="disulfide bond" evidence="2 7">
    <location>
        <begin position="41"/>
        <end position="52"/>
    </location>
</feature>
<feature type="disulfide bond" evidence="2 7">
    <location>
        <begin position="53"/>
        <end position="58"/>
    </location>
</feature>
<feature type="strand" evidence="8">
    <location>
        <begin position="2"/>
        <end position="4"/>
    </location>
</feature>
<feature type="strand" evidence="8">
    <location>
        <begin position="7"/>
        <end position="11"/>
    </location>
</feature>
<feature type="strand" evidence="8">
    <location>
        <begin position="14"/>
        <end position="16"/>
    </location>
</feature>
<feature type="strand" evidence="8">
    <location>
        <begin position="20"/>
        <end position="27"/>
    </location>
</feature>
<feature type="strand" evidence="8">
    <location>
        <begin position="30"/>
        <end position="41"/>
    </location>
</feature>
<feature type="strand" evidence="8">
    <location>
        <begin position="48"/>
        <end position="55"/>
    </location>
</feature>
<reference key="1">
    <citation type="journal article" date="1977" name="Eur. J. Biochem.">
        <title>Snake venom toxins. The amino-acid sequence of a short-neurotoxin homologue from Dendroaspis polylepis polylepis (black mamba) venom.</title>
        <authorList>
            <person name="Strydom D.J."/>
        </authorList>
    </citation>
    <scope>PROTEIN SEQUENCE</scope>
    <scope>SUBCELLULAR LOCATION</scope>
    <source>
        <tissue>Venom</tissue>
    </source>
</reference>
<reference key="2">
    <citation type="journal article" date="1994" name="Artery">
        <title>FS2. a mamba venom toxin, is a specific blocker of the L-type calcium channels.</title>
        <authorList>
            <person name="Yasuda O."/>
            <person name="Morimoto S."/>
            <person name="Jiang B."/>
            <person name="Kuroda H."/>
            <person name="Kimura T."/>
            <person name="Sakakibara S."/>
            <person name="Fukuo K."/>
            <person name="Chen S."/>
            <person name="Tamatani M."/>
            <person name="Ogihara T."/>
        </authorList>
    </citation>
    <scope>FUNCTION</scope>
    <scope>TOXIC DOSE</scope>
</reference>
<reference key="3">
    <citation type="journal article" date="1998" name="Biochemistry">
        <title>Flanking proline residues identify the L-type Ca2+ channel binding site of calciseptine and FS2.</title>
        <authorList>
            <person name="Kini R.M."/>
            <person name="Caldwell R.A."/>
            <person name="Wu Q.Y."/>
            <person name="Baumgarten C.M."/>
            <person name="Feher J.J."/>
            <person name="Evans H.J."/>
        </authorList>
    </citation>
    <scope>SYNTHESIS OF 41-48</scope>
</reference>
<reference key="4">
    <citation type="journal article" date="1995" name="Biochemistry">
        <title>NMR and restrained molecular dynamics study of the three-dimensional solution structure of toxin FS2, a specific blocker of the L-type calcium channel, isolated from black mamba venom.</title>
        <authorList>
            <person name="Albrand J.-P."/>
            <person name="Blackledge M.J."/>
            <person name="Pascaud F."/>
            <person name="Hollecker M."/>
            <person name="Marion D."/>
        </authorList>
    </citation>
    <scope>STRUCTURE BY NMR</scope>
    <scope>DISULFIDE BONDS</scope>
</reference>
<organism>
    <name type="scientific">Dendroaspis polylepis polylepis</name>
    <name type="common">Black mamba</name>
    <dbReference type="NCBI Taxonomy" id="8620"/>
    <lineage>
        <taxon>Eukaryota</taxon>
        <taxon>Metazoa</taxon>
        <taxon>Chordata</taxon>
        <taxon>Craniata</taxon>
        <taxon>Vertebrata</taxon>
        <taxon>Euteleostomi</taxon>
        <taxon>Lepidosauria</taxon>
        <taxon>Squamata</taxon>
        <taxon>Bifurcata</taxon>
        <taxon>Unidentata</taxon>
        <taxon>Episquamata</taxon>
        <taxon>Toxicofera</taxon>
        <taxon>Serpentes</taxon>
        <taxon>Colubroidea</taxon>
        <taxon>Elapidae</taxon>
        <taxon>Elapinae</taxon>
        <taxon>Dendroaspis</taxon>
    </lineage>
</organism>
<accession>P01414</accession>
<accession>Q9PS74</accession>